<feature type="chain" id="PRO_1000010016" description="DNA mismatch repair protein MutL">
    <location>
        <begin position="1"/>
        <end position="651"/>
    </location>
</feature>
<feature type="region of interest" description="Disordered" evidence="2">
    <location>
        <begin position="336"/>
        <end position="398"/>
    </location>
</feature>
<feature type="compositionally biased region" description="Polar residues" evidence="2">
    <location>
        <begin position="385"/>
        <end position="394"/>
    </location>
</feature>
<protein>
    <recommendedName>
        <fullName evidence="1">DNA mismatch repair protein MutL</fullName>
    </recommendedName>
</protein>
<gene>
    <name evidence="1" type="primary">mutL</name>
    <name type="ordered locus">ECA3936</name>
</gene>
<proteinExistence type="inferred from homology"/>
<dbReference type="EMBL" id="BX950851">
    <property type="protein sequence ID" value="CAG76833.1"/>
    <property type="molecule type" value="Genomic_DNA"/>
</dbReference>
<dbReference type="RefSeq" id="WP_011095430.1">
    <property type="nucleotide sequence ID" value="NC_004547.2"/>
</dbReference>
<dbReference type="SMR" id="Q6D065"/>
<dbReference type="STRING" id="218491.ECA3936"/>
<dbReference type="GeneID" id="57210550"/>
<dbReference type="KEGG" id="eca:ECA3936"/>
<dbReference type="PATRIC" id="fig|218491.5.peg.4001"/>
<dbReference type="eggNOG" id="COG0323">
    <property type="taxonomic scope" value="Bacteria"/>
</dbReference>
<dbReference type="HOGENOM" id="CLU_004131_5_1_6"/>
<dbReference type="OrthoDB" id="9763467at2"/>
<dbReference type="Proteomes" id="UP000007966">
    <property type="component" value="Chromosome"/>
</dbReference>
<dbReference type="GO" id="GO:0032300">
    <property type="term" value="C:mismatch repair complex"/>
    <property type="evidence" value="ECO:0007669"/>
    <property type="project" value="InterPro"/>
</dbReference>
<dbReference type="GO" id="GO:0005524">
    <property type="term" value="F:ATP binding"/>
    <property type="evidence" value="ECO:0007669"/>
    <property type="project" value="InterPro"/>
</dbReference>
<dbReference type="GO" id="GO:0016887">
    <property type="term" value="F:ATP hydrolysis activity"/>
    <property type="evidence" value="ECO:0007669"/>
    <property type="project" value="InterPro"/>
</dbReference>
<dbReference type="GO" id="GO:0140664">
    <property type="term" value="F:ATP-dependent DNA damage sensor activity"/>
    <property type="evidence" value="ECO:0007669"/>
    <property type="project" value="InterPro"/>
</dbReference>
<dbReference type="GO" id="GO:0030983">
    <property type="term" value="F:mismatched DNA binding"/>
    <property type="evidence" value="ECO:0007669"/>
    <property type="project" value="InterPro"/>
</dbReference>
<dbReference type="GO" id="GO:0006298">
    <property type="term" value="P:mismatch repair"/>
    <property type="evidence" value="ECO:0007669"/>
    <property type="project" value="UniProtKB-UniRule"/>
</dbReference>
<dbReference type="CDD" id="cd16926">
    <property type="entry name" value="HATPase_MutL-MLH-PMS-like"/>
    <property type="match status" value="1"/>
</dbReference>
<dbReference type="CDD" id="cd03482">
    <property type="entry name" value="MutL_Trans_MutL"/>
    <property type="match status" value="1"/>
</dbReference>
<dbReference type="FunFam" id="3.30.230.10:FF:000013">
    <property type="entry name" value="DNA mismatch repair endonuclease MutL"/>
    <property type="match status" value="1"/>
</dbReference>
<dbReference type="FunFam" id="3.30.565.10:FF:000003">
    <property type="entry name" value="DNA mismatch repair endonuclease MutL"/>
    <property type="match status" value="1"/>
</dbReference>
<dbReference type="Gene3D" id="3.30.230.10">
    <property type="match status" value="1"/>
</dbReference>
<dbReference type="Gene3D" id="3.30.565.10">
    <property type="entry name" value="Histidine kinase-like ATPase, C-terminal domain"/>
    <property type="match status" value="1"/>
</dbReference>
<dbReference type="Gene3D" id="3.30.1540.20">
    <property type="entry name" value="MutL, C-terminal domain, dimerisation subdomain"/>
    <property type="match status" value="1"/>
</dbReference>
<dbReference type="Gene3D" id="3.30.1370.100">
    <property type="entry name" value="MutL, C-terminal domain, regulatory subdomain"/>
    <property type="match status" value="1"/>
</dbReference>
<dbReference type="HAMAP" id="MF_00149">
    <property type="entry name" value="DNA_mis_repair"/>
    <property type="match status" value="1"/>
</dbReference>
<dbReference type="InterPro" id="IPR014762">
    <property type="entry name" value="DNA_mismatch_repair_CS"/>
</dbReference>
<dbReference type="InterPro" id="IPR020667">
    <property type="entry name" value="DNA_mismatch_repair_MutL"/>
</dbReference>
<dbReference type="InterPro" id="IPR013507">
    <property type="entry name" value="DNA_mismatch_S5_2-like"/>
</dbReference>
<dbReference type="InterPro" id="IPR036890">
    <property type="entry name" value="HATPase_C_sf"/>
</dbReference>
<dbReference type="InterPro" id="IPR002099">
    <property type="entry name" value="MutL/Mlh/PMS"/>
</dbReference>
<dbReference type="InterPro" id="IPR038973">
    <property type="entry name" value="MutL/Mlh/Pms-like"/>
</dbReference>
<dbReference type="InterPro" id="IPR014790">
    <property type="entry name" value="MutL_C"/>
</dbReference>
<dbReference type="InterPro" id="IPR042120">
    <property type="entry name" value="MutL_C_dimsub"/>
</dbReference>
<dbReference type="InterPro" id="IPR042121">
    <property type="entry name" value="MutL_C_regsub"/>
</dbReference>
<dbReference type="InterPro" id="IPR037198">
    <property type="entry name" value="MutL_C_sf"/>
</dbReference>
<dbReference type="InterPro" id="IPR020568">
    <property type="entry name" value="Ribosomal_Su5_D2-typ_SF"/>
</dbReference>
<dbReference type="InterPro" id="IPR014721">
    <property type="entry name" value="Ribsml_uS5_D2-typ_fold_subgr"/>
</dbReference>
<dbReference type="NCBIfam" id="TIGR00585">
    <property type="entry name" value="mutl"/>
    <property type="match status" value="1"/>
</dbReference>
<dbReference type="NCBIfam" id="NF000948">
    <property type="entry name" value="PRK00095.1-1"/>
    <property type="match status" value="1"/>
</dbReference>
<dbReference type="PANTHER" id="PTHR10073">
    <property type="entry name" value="DNA MISMATCH REPAIR PROTEIN MLH, PMS, MUTL"/>
    <property type="match status" value="1"/>
</dbReference>
<dbReference type="PANTHER" id="PTHR10073:SF12">
    <property type="entry name" value="DNA MISMATCH REPAIR PROTEIN MLH1"/>
    <property type="match status" value="1"/>
</dbReference>
<dbReference type="Pfam" id="PF01119">
    <property type="entry name" value="DNA_mis_repair"/>
    <property type="match status" value="1"/>
</dbReference>
<dbReference type="Pfam" id="PF13589">
    <property type="entry name" value="HATPase_c_3"/>
    <property type="match status" value="1"/>
</dbReference>
<dbReference type="Pfam" id="PF08676">
    <property type="entry name" value="MutL_C"/>
    <property type="match status" value="1"/>
</dbReference>
<dbReference type="SMART" id="SM01340">
    <property type="entry name" value="DNA_mis_repair"/>
    <property type="match status" value="1"/>
</dbReference>
<dbReference type="SMART" id="SM00853">
    <property type="entry name" value="MutL_C"/>
    <property type="match status" value="1"/>
</dbReference>
<dbReference type="SUPFAM" id="SSF55874">
    <property type="entry name" value="ATPase domain of HSP90 chaperone/DNA topoisomerase II/histidine kinase"/>
    <property type="match status" value="1"/>
</dbReference>
<dbReference type="SUPFAM" id="SSF118116">
    <property type="entry name" value="DNA mismatch repair protein MutL"/>
    <property type="match status" value="1"/>
</dbReference>
<dbReference type="SUPFAM" id="SSF54211">
    <property type="entry name" value="Ribosomal protein S5 domain 2-like"/>
    <property type="match status" value="1"/>
</dbReference>
<dbReference type="PROSITE" id="PS00058">
    <property type="entry name" value="DNA_MISMATCH_REPAIR_1"/>
    <property type="match status" value="1"/>
</dbReference>
<accession>Q6D065</accession>
<reference key="1">
    <citation type="journal article" date="2004" name="Proc. Natl. Acad. Sci. U.S.A.">
        <title>Genome sequence of the enterobacterial phytopathogen Erwinia carotovora subsp. atroseptica and characterization of virulence factors.</title>
        <authorList>
            <person name="Bell K.S."/>
            <person name="Sebaihia M."/>
            <person name="Pritchard L."/>
            <person name="Holden M.T.G."/>
            <person name="Hyman L.J."/>
            <person name="Holeva M.C."/>
            <person name="Thomson N.R."/>
            <person name="Bentley S.D."/>
            <person name="Churcher L.J.C."/>
            <person name="Mungall K."/>
            <person name="Atkin R."/>
            <person name="Bason N."/>
            <person name="Brooks K."/>
            <person name="Chillingworth T."/>
            <person name="Clark K."/>
            <person name="Doggett J."/>
            <person name="Fraser A."/>
            <person name="Hance Z."/>
            <person name="Hauser H."/>
            <person name="Jagels K."/>
            <person name="Moule S."/>
            <person name="Norbertczak H."/>
            <person name="Ormond D."/>
            <person name="Price C."/>
            <person name="Quail M.A."/>
            <person name="Sanders M."/>
            <person name="Walker D."/>
            <person name="Whitehead S."/>
            <person name="Salmond G.P.C."/>
            <person name="Birch P.R.J."/>
            <person name="Parkhill J."/>
            <person name="Toth I.K."/>
        </authorList>
    </citation>
    <scope>NUCLEOTIDE SEQUENCE [LARGE SCALE GENOMIC DNA]</scope>
    <source>
        <strain>SCRI 1043 / ATCC BAA-672</strain>
    </source>
</reference>
<keyword id="KW-0227">DNA damage</keyword>
<keyword id="KW-0234">DNA repair</keyword>
<keyword id="KW-1185">Reference proteome</keyword>
<organism>
    <name type="scientific">Pectobacterium atrosepticum (strain SCRI 1043 / ATCC BAA-672)</name>
    <name type="common">Erwinia carotovora subsp. atroseptica</name>
    <dbReference type="NCBI Taxonomy" id="218491"/>
    <lineage>
        <taxon>Bacteria</taxon>
        <taxon>Pseudomonadati</taxon>
        <taxon>Pseudomonadota</taxon>
        <taxon>Gammaproteobacteria</taxon>
        <taxon>Enterobacterales</taxon>
        <taxon>Pectobacteriaceae</taxon>
        <taxon>Pectobacterium</taxon>
    </lineage>
</organism>
<name>MUTL_PECAS</name>
<evidence type="ECO:0000255" key="1">
    <source>
        <dbReference type="HAMAP-Rule" id="MF_00149"/>
    </source>
</evidence>
<evidence type="ECO:0000256" key="2">
    <source>
        <dbReference type="SAM" id="MobiDB-lite"/>
    </source>
</evidence>
<comment type="function">
    <text evidence="1">This protein is involved in the repair of mismatches in DNA. It is required for dam-dependent methyl-directed DNA mismatch repair. May act as a 'molecular matchmaker', a protein that promotes the formation of a stable complex between two or more DNA-binding proteins in an ATP-dependent manner without itself being part of a final effector complex.</text>
</comment>
<comment type="similarity">
    <text evidence="1">Belongs to the DNA mismatch repair MutL/HexB family.</text>
</comment>
<sequence>MPIQVLPPQLANQIAAGEVVERPASVVKELVENSLDAGATRIDIDIERGGAKLIRIRDNGSGIGKDELTLALARHATSKIATLDDLEAIVSMGFRGEALASISSVSRLTLTSRTAEQSEAWQAYAEGRDMAVTVKPAAHPVGTTLEVLDLFYNTPARRKFMRTEKTEFTHIDEVVRRIALARFDVAITLHHNGKLMRQYRAAPDKNQYERRLGSICGATFLQHALAVSWQHGDLTIHGWVADPVGAKQLPDMQYCYVNQRMMRDRLINHAIRQAYQDQLSDEQQPAYVLYLEIDPHQVDVNVHPAKQEVRFHQARLVHDFIYQAVMSVLQQASAPRLDMTEPETGKPVQWQQENRPAAGENHFAQPPRTTNSPSYSGKAPRTGQARESANSGYQPENPYQKKQDELYKALLQPTDNGASTPPSGIAAPSTVLHDSCPNRTATNTAASNNKQRALVESPLESQSTGFGRVLTVYPPCYALLEYHKGLAILSLPVAERYLKVVQLTPSEEGLRAQPLLIPQRLTLSKSELNVLSTHHTLLTRFGIDVFVESQRATLRAVPLPLRQQNLQNLISELIGYLADYQTVETQQVEPDALASWMATRLQSEQENWSHSQAIQLLADVERLCPQLAKTPPSELLYMMDIHDAIKALKHE</sequence>